<gene>
    <name evidence="4" type="primary">AcuM</name>
    <name type="ORF">AFUA_2g12330</name>
</gene>
<keyword id="KW-0238">DNA-binding</keyword>
<keyword id="KW-0479">Metal-binding</keyword>
<keyword id="KW-0539">Nucleus</keyword>
<keyword id="KW-1185">Reference proteome</keyword>
<keyword id="KW-0804">Transcription</keyword>
<keyword id="KW-0805">Transcription regulation</keyword>
<keyword id="KW-0862">Zinc</keyword>
<feature type="chain" id="PRO_0000444417" description="Zinc cluster transcription factor acuM">
    <location>
        <begin position="1"/>
        <end position="627"/>
    </location>
</feature>
<feature type="DNA-binding region" description="Zn(2)-C6 fungal-type" evidence="1">
    <location>
        <begin position="197"/>
        <end position="225"/>
    </location>
</feature>
<feature type="region of interest" description="Disordered" evidence="2">
    <location>
        <begin position="1"/>
        <end position="40"/>
    </location>
</feature>
<feature type="region of interest" description="Disordered" evidence="2">
    <location>
        <begin position="129"/>
        <end position="148"/>
    </location>
</feature>
<feature type="region of interest" description="Disordered" evidence="2">
    <location>
        <begin position="155"/>
        <end position="193"/>
    </location>
</feature>
<feature type="region of interest" description="Disordered" evidence="2">
    <location>
        <begin position="225"/>
        <end position="258"/>
    </location>
</feature>
<feature type="region of interest" description="Disordered" evidence="2">
    <location>
        <begin position="277"/>
        <end position="305"/>
    </location>
</feature>
<feature type="region of interest" description="Disordered" evidence="2">
    <location>
        <begin position="394"/>
        <end position="416"/>
    </location>
</feature>
<feature type="compositionally biased region" description="Polar residues" evidence="2">
    <location>
        <begin position="162"/>
        <end position="171"/>
    </location>
</feature>
<feature type="compositionally biased region" description="Basic and acidic residues" evidence="2">
    <location>
        <begin position="225"/>
        <end position="251"/>
    </location>
</feature>
<feature type="compositionally biased region" description="Polar residues" evidence="2">
    <location>
        <begin position="286"/>
        <end position="305"/>
    </location>
</feature>
<feature type="compositionally biased region" description="Low complexity" evidence="2">
    <location>
        <begin position="394"/>
        <end position="403"/>
    </location>
</feature>
<feature type="compositionally biased region" description="Polar residues" evidence="2">
    <location>
        <begin position="404"/>
        <end position="416"/>
    </location>
</feature>
<protein>
    <recommendedName>
        <fullName evidence="4">Zinc cluster transcription factor acuM</fullName>
    </recommendedName>
    <alternativeName>
        <fullName evidence="5">Iron acquisition regulator acuM</fullName>
    </alternativeName>
</protein>
<proteinExistence type="evidence at transcript level"/>
<accession>E5DG73</accession>
<accession>Q4X0T8</accession>
<sequence>MGCRKSSCPRHHTPKAGTFPPRWFPSAEEPGKKGGQPARPTVVISAGTSEHETITIARRRRTPQLKARHLLSAPANASDLSSSKLIFDVCRSPSDLLLRVPTTNSEHQQAELCATALRPTRSKRLMTENGTAQTGTVPVEQPRNGTMENAKLNMAEGDSSRMESGSKNTASPPVKADNNAAGTHSSPKKRRKVNHACVYCRRSHMTCDSERPCTRCIKRNIGHLCHDEPREPSKRARSEHEHSTAEEDGHSNNEFSNAQSMPRNVDVQDAAGQQILPDGTVALPPSSVSAVQHNTIPSSSAQNSLGHNSQQLLGYNEWLGGQSQFQDMHTFHPSYMFNAPEVTNEYNLLGDFLSSSLLDDGGMFSNDNLQGIYSDPTLINSMANLDNTALLQQAQPSQPTQSQPHQNDSVQGPSSTVVNDKARETYYMTAADPSGSDPPEERMNKLLKAKYDAGLLKPFNYVKGYARLNQYMEKNMKQSSRQKILRQLDKFRPKFRERMQSLTDIELILVEMWFERSLMEYDRVFASMAIPACCWRRTGEIFRGNKEMAELIGVPIESLRDGKLAIHEIIVEDQLVSYWEKFGAIAFDNTQKAMLTSCTLKNPNSSNPGNGIPCCFSFTIRRDNHNM</sequence>
<dbReference type="EMBL" id="AAHF01000001">
    <property type="protein sequence ID" value="EAL93527.1"/>
    <property type="status" value="ALT_SEQ"/>
    <property type="molecule type" value="Genomic_DNA"/>
</dbReference>
<dbReference type="EMBL" id="GU290314">
    <property type="protein sequence ID" value="ADK36628.1"/>
    <property type="molecule type" value="mRNA"/>
</dbReference>
<dbReference type="RefSeq" id="XP_755565.1">
    <property type="nucleotide sequence ID" value="XM_750472.1"/>
</dbReference>
<dbReference type="FunCoup" id="E5DG73">
    <property type="interactions" value="404"/>
</dbReference>
<dbReference type="STRING" id="330879.E5DG73"/>
<dbReference type="EnsemblFungi" id="EAL93527">
    <property type="protein sequence ID" value="EAL93527"/>
    <property type="gene ID" value="AFUA_2G12330"/>
</dbReference>
<dbReference type="GeneID" id="3513314"/>
<dbReference type="KEGG" id="afm:AFUA_2G12330"/>
<dbReference type="eggNOG" id="ENOG502QQGC">
    <property type="taxonomic scope" value="Eukaryota"/>
</dbReference>
<dbReference type="HOGENOM" id="CLU_010748_0_0_1"/>
<dbReference type="InParanoid" id="E5DG73"/>
<dbReference type="OrthoDB" id="65716at2759"/>
<dbReference type="Proteomes" id="UP000002530">
    <property type="component" value="Chromosome 2"/>
</dbReference>
<dbReference type="GO" id="GO:0005634">
    <property type="term" value="C:nucleus"/>
    <property type="evidence" value="ECO:0000318"/>
    <property type="project" value="GO_Central"/>
</dbReference>
<dbReference type="GO" id="GO:0000981">
    <property type="term" value="F:DNA-binding transcription factor activity, RNA polymerase II-specific"/>
    <property type="evidence" value="ECO:0007669"/>
    <property type="project" value="InterPro"/>
</dbReference>
<dbReference type="GO" id="GO:0000977">
    <property type="term" value="F:RNA polymerase II transcription regulatory region sequence-specific DNA binding"/>
    <property type="evidence" value="ECO:0000318"/>
    <property type="project" value="GO_Central"/>
</dbReference>
<dbReference type="GO" id="GO:0008270">
    <property type="term" value="F:zinc ion binding"/>
    <property type="evidence" value="ECO:0007669"/>
    <property type="project" value="InterPro"/>
</dbReference>
<dbReference type="CDD" id="cd00067">
    <property type="entry name" value="GAL4"/>
    <property type="match status" value="1"/>
</dbReference>
<dbReference type="FunFam" id="4.10.240.10:FF:000002">
    <property type="entry name" value="Zn cluster transcription factor Rds2"/>
    <property type="match status" value="1"/>
</dbReference>
<dbReference type="Gene3D" id="4.10.240.10">
    <property type="entry name" value="Zn(2)-C6 fungal-type DNA-binding domain"/>
    <property type="match status" value="1"/>
</dbReference>
<dbReference type="InterPro" id="IPR056751">
    <property type="entry name" value="PAS_13"/>
</dbReference>
<dbReference type="InterPro" id="IPR053045">
    <property type="entry name" value="Zinc_cluster_trans_reg"/>
</dbReference>
<dbReference type="InterPro" id="IPR036864">
    <property type="entry name" value="Zn2-C6_fun-type_DNA-bd_sf"/>
</dbReference>
<dbReference type="InterPro" id="IPR001138">
    <property type="entry name" value="Zn2Cys6_DnaBD"/>
</dbReference>
<dbReference type="PANTHER" id="PTHR31986">
    <property type="entry name" value="REGULATOR OF DRUG SENSITIVITY 2"/>
    <property type="match status" value="1"/>
</dbReference>
<dbReference type="PANTHER" id="PTHR31986:SF7">
    <property type="entry name" value="REGULATOR OF DRUG SENSITIVITY 2"/>
    <property type="match status" value="1"/>
</dbReference>
<dbReference type="Pfam" id="PF24990">
    <property type="entry name" value="PAS_13"/>
    <property type="match status" value="1"/>
</dbReference>
<dbReference type="Pfam" id="PF00172">
    <property type="entry name" value="Zn_clus"/>
    <property type="match status" value="1"/>
</dbReference>
<dbReference type="SMART" id="SM00066">
    <property type="entry name" value="GAL4"/>
    <property type="match status" value="1"/>
</dbReference>
<dbReference type="SUPFAM" id="SSF57701">
    <property type="entry name" value="Zn2/Cys6 DNA-binding domain"/>
    <property type="match status" value="1"/>
</dbReference>
<dbReference type="PROSITE" id="PS00463">
    <property type="entry name" value="ZN2_CY6_FUNGAL_1"/>
    <property type="match status" value="1"/>
</dbReference>
<dbReference type="PROSITE" id="PS50048">
    <property type="entry name" value="ZN2_CY6_FUNGAL_2"/>
    <property type="match status" value="1"/>
</dbReference>
<name>ACUM_ASPFU</name>
<comment type="function">
    <text evidence="3">Transcription factor that governs genes involved in reductive and siderophore-mediated iron acquisition, and carbon metabolism (PubMed:21062375). Suppresses the expression of sreA and induces hapX to stimulate expression of genes involved in both reductive iron assimilation and siderophore-mediated iron uptake which is essential for the maximal virulence (PubMed:21062375). Also regulates genes involved in gluconeogenesis (PubMed:21062375).</text>
</comment>
<comment type="subcellular location">
    <subcellularLocation>
        <location evidence="5">Nucleus</location>
    </subcellularLocation>
</comment>
<comment type="induction">
    <text evidence="3">Expressed constitutively with similar lebels in swollen conidia, germlings and hyphae (PubMed:21062375).</text>
</comment>
<comment type="disruption phenotype">
    <text evidence="3">Leads to attenuated virulence in mouse models of haematogenously disseminated and invasive pulmonary aspergillosis (PubMed:21062375). Results in increased expression of sreA and reduced expression of hapX iron acquisition transcription factors (PubMed:21062375). Also impairs gluconeogenesis (PubMed:21062375).</text>
</comment>
<comment type="sequence caution" evidence="5">
    <conflict type="erroneous gene model prediction">
        <sequence resource="EMBL-CDS" id="EAL93527"/>
    </conflict>
</comment>
<organism>
    <name type="scientific">Aspergillus fumigatus (strain ATCC MYA-4609 / CBS 101355 / FGSC A1100 / Af293)</name>
    <name type="common">Neosartorya fumigata</name>
    <dbReference type="NCBI Taxonomy" id="330879"/>
    <lineage>
        <taxon>Eukaryota</taxon>
        <taxon>Fungi</taxon>
        <taxon>Dikarya</taxon>
        <taxon>Ascomycota</taxon>
        <taxon>Pezizomycotina</taxon>
        <taxon>Eurotiomycetes</taxon>
        <taxon>Eurotiomycetidae</taxon>
        <taxon>Eurotiales</taxon>
        <taxon>Aspergillaceae</taxon>
        <taxon>Aspergillus</taxon>
        <taxon>Aspergillus subgen. Fumigati</taxon>
    </lineage>
</organism>
<reference key="1">
    <citation type="journal article" date="2005" name="Nature">
        <title>Genomic sequence of the pathogenic and allergenic filamentous fungus Aspergillus fumigatus.</title>
        <authorList>
            <person name="Nierman W.C."/>
            <person name="Pain A."/>
            <person name="Anderson M.J."/>
            <person name="Wortman J.R."/>
            <person name="Kim H.S."/>
            <person name="Arroyo J."/>
            <person name="Berriman M."/>
            <person name="Abe K."/>
            <person name="Archer D.B."/>
            <person name="Bermejo C."/>
            <person name="Bennett J.W."/>
            <person name="Bowyer P."/>
            <person name="Chen D."/>
            <person name="Collins M."/>
            <person name="Coulsen R."/>
            <person name="Davies R."/>
            <person name="Dyer P.S."/>
            <person name="Farman M.L."/>
            <person name="Fedorova N."/>
            <person name="Fedorova N.D."/>
            <person name="Feldblyum T.V."/>
            <person name="Fischer R."/>
            <person name="Fosker N."/>
            <person name="Fraser A."/>
            <person name="Garcia J.L."/>
            <person name="Garcia M.J."/>
            <person name="Goble A."/>
            <person name="Goldman G.H."/>
            <person name="Gomi K."/>
            <person name="Griffith-Jones S."/>
            <person name="Gwilliam R."/>
            <person name="Haas B.J."/>
            <person name="Haas H."/>
            <person name="Harris D.E."/>
            <person name="Horiuchi H."/>
            <person name="Huang J."/>
            <person name="Humphray S."/>
            <person name="Jimenez J."/>
            <person name="Keller N."/>
            <person name="Khouri H."/>
            <person name="Kitamoto K."/>
            <person name="Kobayashi T."/>
            <person name="Konzack S."/>
            <person name="Kulkarni R."/>
            <person name="Kumagai T."/>
            <person name="Lafton A."/>
            <person name="Latge J.-P."/>
            <person name="Li W."/>
            <person name="Lord A."/>
            <person name="Lu C."/>
            <person name="Majoros W.H."/>
            <person name="May G.S."/>
            <person name="Miller B.L."/>
            <person name="Mohamoud Y."/>
            <person name="Molina M."/>
            <person name="Monod M."/>
            <person name="Mouyna I."/>
            <person name="Mulligan S."/>
            <person name="Murphy L.D."/>
            <person name="O'Neil S."/>
            <person name="Paulsen I."/>
            <person name="Penalva M.A."/>
            <person name="Pertea M."/>
            <person name="Price C."/>
            <person name="Pritchard B.L."/>
            <person name="Quail M.A."/>
            <person name="Rabbinowitsch E."/>
            <person name="Rawlins N."/>
            <person name="Rajandream M.A."/>
            <person name="Reichard U."/>
            <person name="Renauld H."/>
            <person name="Robson G.D."/>
            <person name="Rodriguez de Cordoba S."/>
            <person name="Rodriguez-Pena J.M."/>
            <person name="Ronning C.M."/>
            <person name="Rutter S."/>
            <person name="Salzberg S.L."/>
            <person name="Sanchez M."/>
            <person name="Sanchez-Ferrero J.C."/>
            <person name="Saunders D."/>
            <person name="Seeger K."/>
            <person name="Squares R."/>
            <person name="Squares S."/>
            <person name="Takeuchi M."/>
            <person name="Tekaia F."/>
            <person name="Turner G."/>
            <person name="Vazquez de Aldana C.R."/>
            <person name="Weidman J."/>
            <person name="White O."/>
            <person name="Woodward J.R."/>
            <person name="Yu J.-H."/>
            <person name="Fraser C.M."/>
            <person name="Galagan J.E."/>
            <person name="Asai K."/>
            <person name="Machida M."/>
            <person name="Hall N."/>
            <person name="Barrell B.G."/>
            <person name="Denning D.W."/>
        </authorList>
    </citation>
    <scope>NUCLEOTIDE SEQUENCE [LARGE SCALE GENOMIC DNA]</scope>
    <source>
        <strain>ATCC MYA-4609 / CBS 101355 / FGSC A1100 / Af293</strain>
    </source>
</reference>
<reference key="2">
    <citation type="journal article" date="2010" name="Mol. Microbiol.">
        <title>Aspergillus fumigatus AcuM regulates both iron acquisition and gluconeogenesis.</title>
        <authorList>
            <person name="Liu H."/>
            <person name="Gravelat F.N."/>
            <person name="Chiang L.Y."/>
            <person name="Chen D."/>
            <person name="Vanier G."/>
            <person name="Ejzykowicz D.E."/>
            <person name="Ibrahim A.S."/>
            <person name="Nierman W.C."/>
            <person name="Sheppard D.C."/>
            <person name="Filler S.G."/>
        </authorList>
    </citation>
    <scope>NUCLEOTIDE SEQUENCE [MRNA] OF 175-627</scope>
    <scope>FUNCTION</scope>
    <scope>DISRUPTION PHENOTYPE</scope>
    <scope>INDUCTION</scope>
    <source>
        <strain>ATCC MYA-4609 / CBS 101355 / FGSC A1100 / Af293</strain>
    </source>
</reference>
<evidence type="ECO:0000255" key="1">
    <source>
        <dbReference type="PROSITE-ProRule" id="PRU00227"/>
    </source>
</evidence>
<evidence type="ECO:0000256" key="2">
    <source>
        <dbReference type="SAM" id="MobiDB-lite"/>
    </source>
</evidence>
<evidence type="ECO:0000269" key="3">
    <source>
    </source>
</evidence>
<evidence type="ECO:0000303" key="4">
    <source>
    </source>
</evidence>
<evidence type="ECO:0000305" key="5"/>